<dbReference type="EMBL" id="BX571871">
    <property type="protein sequence ID" value="CAE15989.1"/>
    <property type="molecule type" value="Genomic_DNA"/>
</dbReference>
<dbReference type="RefSeq" id="WP_011147783.1">
    <property type="nucleotide sequence ID" value="NC_005126.1"/>
</dbReference>
<dbReference type="STRING" id="243265.plu3616"/>
<dbReference type="GeneID" id="48849861"/>
<dbReference type="KEGG" id="plu:plu3616"/>
<dbReference type="eggNOG" id="COG3112">
    <property type="taxonomic scope" value="Bacteria"/>
</dbReference>
<dbReference type="HOGENOM" id="CLU_139226_0_0_6"/>
<dbReference type="OrthoDB" id="5739292at2"/>
<dbReference type="Proteomes" id="UP000002514">
    <property type="component" value="Chromosome"/>
</dbReference>
<dbReference type="HAMAP" id="MF_01053">
    <property type="entry name" value="UPF0231"/>
    <property type="match status" value="1"/>
</dbReference>
<dbReference type="InterPro" id="IPR008249">
    <property type="entry name" value="UPF0231"/>
</dbReference>
<dbReference type="NCBIfam" id="NF003576">
    <property type="entry name" value="PRK05248.1-3"/>
    <property type="match status" value="1"/>
</dbReference>
<dbReference type="Pfam" id="PF06062">
    <property type="entry name" value="UPF0231"/>
    <property type="match status" value="1"/>
</dbReference>
<dbReference type="PIRSF" id="PIRSF006287">
    <property type="entry name" value="UCP006287"/>
    <property type="match status" value="1"/>
</dbReference>
<proteinExistence type="inferred from homology"/>
<name>Y3616_PHOLL</name>
<feature type="chain" id="PRO_0000214653" description="UPF0231 protein plu3616">
    <location>
        <begin position="1"/>
        <end position="123"/>
    </location>
</feature>
<comment type="similarity">
    <text evidence="1">Belongs to the UPF0231 family.</text>
</comment>
<protein>
    <recommendedName>
        <fullName evidence="1">UPF0231 protein plu3616</fullName>
    </recommendedName>
</protein>
<reference key="1">
    <citation type="journal article" date="2003" name="Nat. Biotechnol.">
        <title>The genome sequence of the entomopathogenic bacterium Photorhabdus luminescens.</title>
        <authorList>
            <person name="Duchaud E."/>
            <person name="Rusniok C."/>
            <person name="Frangeul L."/>
            <person name="Buchrieser C."/>
            <person name="Givaudan A."/>
            <person name="Taourit S."/>
            <person name="Bocs S."/>
            <person name="Boursaux-Eude C."/>
            <person name="Chandler M."/>
            <person name="Charles J.-F."/>
            <person name="Dassa E."/>
            <person name="Derose R."/>
            <person name="Derzelle S."/>
            <person name="Freyssinet G."/>
            <person name="Gaudriault S."/>
            <person name="Medigue C."/>
            <person name="Lanois A."/>
            <person name="Powell K."/>
            <person name="Siguier P."/>
            <person name="Vincent R."/>
            <person name="Wingate V."/>
            <person name="Zouine M."/>
            <person name="Glaser P."/>
            <person name="Boemare N."/>
            <person name="Danchin A."/>
            <person name="Kunst F."/>
        </authorList>
    </citation>
    <scope>NUCLEOTIDE SEQUENCE [LARGE SCALE GENOMIC DNA]</scope>
    <source>
        <strain>DSM 15139 / CIP 105565 / TT01</strain>
    </source>
</reference>
<evidence type="ECO:0000255" key="1">
    <source>
        <dbReference type="HAMAP-Rule" id="MF_01053"/>
    </source>
</evidence>
<keyword id="KW-1185">Reference proteome</keyword>
<accession>Q7N179</accession>
<gene>
    <name type="ordered locus">plu3616</name>
</gene>
<sequence>MEYEFLLDVTGLVTSRFSMDHEAIGQWLNEEVKGDLAVIDKIASALAEIKGSERQWQLVGHEYTLLMDDEEVMVRANQLEFETDSMEEGMSYYDKESLAFCGTKDFIDMLADYRDFILQKYDW</sequence>
<organism>
    <name type="scientific">Photorhabdus laumondii subsp. laumondii (strain DSM 15139 / CIP 105565 / TT01)</name>
    <name type="common">Photorhabdus luminescens subsp. laumondii</name>
    <dbReference type="NCBI Taxonomy" id="243265"/>
    <lineage>
        <taxon>Bacteria</taxon>
        <taxon>Pseudomonadati</taxon>
        <taxon>Pseudomonadota</taxon>
        <taxon>Gammaproteobacteria</taxon>
        <taxon>Enterobacterales</taxon>
        <taxon>Morganellaceae</taxon>
        <taxon>Photorhabdus</taxon>
    </lineage>
</organism>